<comment type="function">
    <text evidence="1">Catalyzes the deamination of 5-methylthioadenosine and S-adenosyl-L-homocysteine into 5-methylthioinosine and S-inosyl-L-homocysteine, respectively. Is also able to deaminate adenosine.</text>
</comment>
<comment type="catalytic activity">
    <reaction evidence="1">
        <text>S-adenosyl-L-homocysteine + H2O + H(+) = S-inosyl-L-homocysteine + NH4(+)</text>
        <dbReference type="Rhea" id="RHEA:20716"/>
        <dbReference type="ChEBI" id="CHEBI:15377"/>
        <dbReference type="ChEBI" id="CHEBI:15378"/>
        <dbReference type="ChEBI" id="CHEBI:28938"/>
        <dbReference type="ChEBI" id="CHEBI:57856"/>
        <dbReference type="ChEBI" id="CHEBI:57985"/>
        <dbReference type="EC" id="3.5.4.28"/>
    </reaction>
</comment>
<comment type="catalytic activity">
    <reaction evidence="1">
        <text>S-methyl-5'-thioadenosine + H2O + H(+) = S-methyl-5'-thioinosine + NH4(+)</text>
        <dbReference type="Rhea" id="RHEA:25025"/>
        <dbReference type="ChEBI" id="CHEBI:15377"/>
        <dbReference type="ChEBI" id="CHEBI:15378"/>
        <dbReference type="ChEBI" id="CHEBI:17509"/>
        <dbReference type="ChEBI" id="CHEBI:28938"/>
        <dbReference type="ChEBI" id="CHEBI:48595"/>
        <dbReference type="EC" id="3.5.4.31"/>
    </reaction>
</comment>
<comment type="cofactor">
    <cofactor evidence="1">
        <name>Zn(2+)</name>
        <dbReference type="ChEBI" id="CHEBI:29105"/>
    </cofactor>
    <text evidence="1">Binds 1 zinc ion per subunit.</text>
</comment>
<comment type="similarity">
    <text evidence="1">Belongs to the metallo-dependent hydrolases superfamily. MTA/SAH deaminase family.</text>
</comment>
<protein>
    <recommendedName>
        <fullName evidence="1">5-methylthioadenosine/S-adenosylhomocysteine deaminase</fullName>
        <shortName evidence="1">MTA/SAH deaminase</shortName>
        <ecNumber evidence="1">3.5.4.28</ecNumber>
        <ecNumber evidence="1">3.5.4.31</ecNumber>
    </recommendedName>
</protein>
<dbReference type="EC" id="3.5.4.28" evidence="1"/>
<dbReference type="EC" id="3.5.4.31" evidence="1"/>
<dbReference type="EMBL" id="CP001147">
    <property type="protein sequence ID" value="ACI20804.1"/>
    <property type="molecule type" value="Genomic_DNA"/>
</dbReference>
<dbReference type="RefSeq" id="WP_012545535.1">
    <property type="nucleotide sequence ID" value="NC_011296.1"/>
</dbReference>
<dbReference type="RefSeq" id="YP_002249032.1">
    <property type="nucleotide sequence ID" value="NC_011296.1"/>
</dbReference>
<dbReference type="SMR" id="B5YLB7"/>
<dbReference type="FunCoup" id="B5YLB7">
    <property type="interactions" value="294"/>
</dbReference>
<dbReference type="STRING" id="289376.THEYE_A1213"/>
<dbReference type="EnsemblBacteria" id="ACI20804">
    <property type="protein sequence ID" value="ACI20804"/>
    <property type="gene ID" value="THEYE_A1213"/>
</dbReference>
<dbReference type="KEGG" id="tye:THEYE_A1213"/>
<dbReference type="PATRIC" id="fig|289376.4.peg.1187"/>
<dbReference type="eggNOG" id="COG0402">
    <property type="taxonomic scope" value="Bacteria"/>
</dbReference>
<dbReference type="HOGENOM" id="CLU_012358_2_1_0"/>
<dbReference type="InParanoid" id="B5YLB7"/>
<dbReference type="OrthoDB" id="9807210at2"/>
<dbReference type="Proteomes" id="UP000000718">
    <property type="component" value="Chromosome"/>
</dbReference>
<dbReference type="GO" id="GO:0090614">
    <property type="term" value="F:5'-methylthioadenosine deaminase activity"/>
    <property type="evidence" value="ECO:0007669"/>
    <property type="project" value="UniProtKB-UniRule"/>
</dbReference>
<dbReference type="GO" id="GO:0046872">
    <property type="term" value="F:metal ion binding"/>
    <property type="evidence" value="ECO:0007669"/>
    <property type="project" value="UniProtKB-KW"/>
</dbReference>
<dbReference type="GO" id="GO:0050270">
    <property type="term" value="F:S-adenosylhomocysteine deaminase activity"/>
    <property type="evidence" value="ECO:0007669"/>
    <property type="project" value="UniProtKB-UniRule"/>
</dbReference>
<dbReference type="CDD" id="cd01298">
    <property type="entry name" value="ATZ_TRZ_like"/>
    <property type="match status" value="1"/>
</dbReference>
<dbReference type="FunFam" id="3.20.20.140:FF:000014">
    <property type="entry name" value="5-methylthioadenosine/S-adenosylhomocysteine deaminase"/>
    <property type="match status" value="1"/>
</dbReference>
<dbReference type="Gene3D" id="3.20.20.140">
    <property type="entry name" value="Metal-dependent hydrolases"/>
    <property type="match status" value="1"/>
</dbReference>
<dbReference type="Gene3D" id="2.30.40.10">
    <property type="entry name" value="Urease, subunit C, domain 1"/>
    <property type="match status" value="1"/>
</dbReference>
<dbReference type="HAMAP" id="MF_01281">
    <property type="entry name" value="MTA_SAH_deamin"/>
    <property type="match status" value="1"/>
</dbReference>
<dbReference type="InterPro" id="IPR006680">
    <property type="entry name" value="Amidohydro-rel"/>
</dbReference>
<dbReference type="InterPro" id="IPR023512">
    <property type="entry name" value="Deaminase_MtaD/DadD"/>
</dbReference>
<dbReference type="InterPro" id="IPR011059">
    <property type="entry name" value="Metal-dep_hydrolase_composite"/>
</dbReference>
<dbReference type="InterPro" id="IPR032466">
    <property type="entry name" value="Metal_Hydrolase"/>
</dbReference>
<dbReference type="InterPro" id="IPR050287">
    <property type="entry name" value="MTA/SAH_deaminase"/>
</dbReference>
<dbReference type="PANTHER" id="PTHR43794:SF11">
    <property type="entry name" value="AMIDOHYDROLASE-RELATED DOMAIN-CONTAINING PROTEIN"/>
    <property type="match status" value="1"/>
</dbReference>
<dbReference type="PANTHER" id="PTHR43794">
    <property type="entry name" value="AMINOHYDROLASE SSNA-RELATED"/>
    <property type="match status" value="1"/>
</dbReference>
<dbReference type="Pfam" id="PF01979">
    <property type="entry name" value="Amidohydro_1"/>
    <property type="match status" value="1"/>
</dbReference>
<dbReference type="SUPFAM" id="SSF51338">
    <property type="entry name" value="Composite domain of metallo-dependent hydrolases"/>
    <property type="match status" value="1"/>
</dbReference>
<dbReference type="SUPFAM" id="SSF51556">
    <property type="entry name" value="Metallo-dependent hydrolases"/>
    <property type="match status" value="1"/>
</dbReference>
<keyword id="KW-0378">Hydrolase</keyword>
<keyword id="KW-0479">Metal-binding</keyword>
<keyword id="KW-1185">Reference proteome</keyword>
<keyword id="KW-0862">Zinc</keyword>
<feature type="chain" id="PRO_1000140356" description="5-methylthioadenosine/S-adenosylhomocysteine deaminase">
    <location>
        <begin position="1"/>
        <end position="439"/>
    </location>
</feature>
<feature type="binding site" evidence="1">
    <location>
        <position position="70"/>
    </location>
    <ligand>
        <name>Zn(2+)</name>
        <dbReference type="ChEBI" id="CHEBI:29105"/>
    </ligand>
</feature>
<feature type="binding site" evidence="1">
    <location>
        <position position="72"/>
    </location>
    <ligand>
        <name>Zn(2+)</name>
        <dbReference type="ChEBI" id="CHEBI:29105"/>
    </ligand>
</feature>
<feature type="binding site" evidence="1">
    <location>
        <position position="99"/>
    </location>
    <ligand>
        <name>substrate</name>
    </ligand>
</feature>
<feature type="binding site" evidence="1">
    <location>
        <position position="192"/>
    </location>
    <ligand>
        <name>substrate</name>
    </ligand>
</feature>
<feature type="binding site" evidence="1">
    <location>
        <position position="219"/>
    </location>
    <ligand>
        <name>Zn(2+)</name>
        <dbReference type="ChEBI" id="CHEBI:29105"/>
    </ligand>
</feature>
<feature type="binding site" evidence="1">
    <location>
        <position position="222"/>
    </location>
    <ligand>
        <name>substrate</name>
    </ligand>
</feature>
<feature type="binding site" evidence="1">
    <location>
        <position position="307"/>
    </location>
    <ligand>
        <name>substrate</name>
    </ligand>
</feature>
<feature type="binding site" evidence="1">
    <location>
        <position position="307"/>
    </location>
    <ligand>
        <name>Zn(2+)</name>
        <dbReference type="ChEBI" id="CHEBI:29105"/>
    </ligand>
</feature>
<name>MTAD_THEYD</name>
<sequence>MGKTFIVRAQYLLTMNKKDEVIENGALVVEDGRIKDVGEFTEILKKYKDPSIPVYGNSYSALMPGFINTHTHAAMVLFRGIADDLPLKQWLTEHIWPKEAKFLSPEFVHDGTSLACIEMLKSGTTTFNDMYFFTEAIAQAAKKLGIRAVVGQGVLDFPTASGKGADDYLAKAKEFIEKYKSDELILPAVAPHAIYTCSRETLLKSKELALKNNVPIHIHLSETFHEVEECLKNNGKRPVKYLKNIGFLEGRITAAHSVWLDDEEIDIMAERNIGVSHCIESNLKLSSGIAPVAKMIKKGVKVSMGTDGAASNNNLDLLEEISIAAKVQKGITADPTVLDVKTCMKMLTIWAAESLGVEKEIGSIETGKRADLVLMNLRKPHLQPVYDIYSTIIYSAKASDIEDVFVNGILVILNGRHQFIDEDELIDKAIWWAERIRNS</sequence>
<reference key="1">
    <citation type="submission" date="2008-08" db="EMBL/GenBank/DDBJ databases">
        <title>The complete genome sequence of Thermodesulfovibrio yellowstonii strain ATCC 51303 / DSM 11347 / YP87.</title>
        <authorList>
            <person name="Dodson R.J."/>
            <person name="Durkin A.S."/>
            <person name="Wu M."/>
            <person name="Eisen J."/>
            <person name="Sutton G."/>
        </authorList>
    </citation>
    <scope>NUCLEOTIDE SEQUENCE [LARGE SCALE GENOMIC DNA]</scope>
    <source>
        <strain>ATCC 51303 / DSM 11347 / YP87</strain>
    </source>
</reference>
<organism>
    <name type="scientific">Thermodesulfovibrio yellowstonii (strain ATCC 51303 / DSM 11347 / YP87)</name>
    <dbReference type="NCBI Taxonomy" id="289376"/>
    <lineage>
        <taxon>Bacteria</taxon>
        <taxon>Pseudomonadati</taxon>
        <taxon>Nitrospirota</taxon>
        <taxon>Thermodesulfovibrionia</taxon>
        <taxon>Thermodesulfovibrionales</taxon>
        <taxon>Thermodesulfovibrionaceae</taxon>
        <taxon>Thermodesulfovibrio</taxon>
    </lineage>
</organism>
<accession>B5YLB7</accession>
<evidence type="ECO:0000255" key="1">
    <source>
        <dbReference type="HAMAP-Rule" id="MF_01281"/>
    </source>
</evidence>
<proteinExistence type="inferred from homology"/>
<gene>
    <name evidence="1" type="primary">mtaD</name>
    <name type="ordered locus">THEYE_A1213</name>
</gene>